<dbReference type="EC" id="3.6.5.4" evidence="3"/>
<dbReference type="EMBL" id="L48286">
    <property type="protein sequence ID" value="AAA79356.1"/>
    <property type="molecule type" value="mRNA"/>
</dbReference>
<dbReference type="PIR" id="T06187">
    <property type="entry name" value="T06187"/>
</dbReference>
<dbReference type="SMR" id="P49970"/>
<dbReference type="ExpressionAtlas" id="P49970">
    <property type="expression patterns" value="baseline and differential"/>
</dbReference>
<dbReference type="GO" id="GO:0005829">
    <property type="term" value="C:cytosol"/>
    <property type="evidence" value="ECO:0007669"/>
    <property type="project" value="TreeGrafter"/>
</dbReference>
<dbReference type="GO" id="GO:0005783">
    <property type="term" value="C:endoplasmic reticulum"/>
    <property type="evidence" value="ECO:0007669"/>
    <property type="project" value="UniProtKB-SubCell"/>
</dbReference>
<dbReference type="GO" id="GO:0005786">
    <property type="term" value="C:signal recognition particle, endoplasmic reticulum targeting"/>
    <property type="evidence" value="ECO:0007669"/>
    <property type="project" value="UniProtKB-KW"/>
</dbReference>
<dbReference type="GO" id="GO:0008312">
    <property type="term" value="F:7S RNA binding"/>
    <property type="evidence" value="ECO:0007669"/>
    <property type="project" value="InterPro"/>
</dbReference>
<dbReference type="GO" id="GO:0016887">
    <property type="term" value="F:ATP hydrolysis activity"/>
    <property type="evidence" value="ECO:0007669"/>
    <property type="project" value="InterPro"/>
</dbReference>
<dbReference type="GO" id="GO:0030942">
    <property type="term" value="F:endoplasmic reticulum signal peptide binding"/>
    <property type="evidence" value="ECO:0007669"/>
    <property type="project" value="TreeGrafter"/>
</dbReference>
<dbReference type="GO" id="GO:0005525">
    <property type="term" value="F:GTP binding"/>
    <property type="evidence" value="ECO:0007669"/>
    <property type="project" value="UniProtKB-KW"/>
</dbReference>
<dbReference type="GO" id="GO:0003924">
    <property type="term" value="F:GTPase activity"/>
    <property type="evidence" value="ECO:0007669"/>
    <property type="project" value="InterPro"/>
</dbReference>
<dbReference type="GO" id="GO:0006616">
    <property type="term" value="P:SRP-dependent cotranslational protein targeting to membrane, translocation"/>
    <property type="evidence" value="ECO:0007669"/>
    <property type="project" value="TreeGrafter"/>
</dbReference>
<dbReference type="CDD" id="cd17875">
    <property type="entry name" value="SRP54_G"/>
    <property type="match status" value="1"/>
</dbReference>
<dbReference type="FunFam" id="1.10.260.30:FF:000004">
    <property type="entry name" value="Signal recognition particle 54 kDa protein"/>
    <property type="match status" value="1"/>
</dbReference>
<dbReference type="FunFam" id="3.40.50.300:FF:000022">
    <property type="entry name" value="Signal recognition particle 54 kDa subunit"/>
    <property type="match status" value="1"/>
</dbReference>
<dbReference type="Gene3D" id="3.40.50.300">
    <property type="entry name" value="P-loop containing nucleotide triphosphate hydrolases"/>
    <property type="match status" value="1"/>
</dbReference>
<dbReference type="Gene3D" id="1.20.120.140">
    <property type="entry name" value="Signal recognition particle SRP54, nucleotide-binding domain"/>
    <property type="match status" value="1"/>
</dbReference>
<dbReference type="Gene3D" id="1.10.260.30">
    <property type="entry name" value="Signal recognition particle, SRP54 subunit, M-domain"/>
    <property type="match status" value="1"/>
</dbReference>
<dbReference type="HAMAP" id="MF_00306">
    <property type="entry name" value="SRP54"/>
    <property type="match status" value="1"/>
</dbReference>
<dbReference type="InterPro" id="IPR003593">
    <property type="entry name" value="AAA+_ATPase"/>
</dbReference>
<dbReference type="InterPro" id="IPR027417">
    <property type="entry name" value="P-loop_NTPase"/>
</dbReference>
<dbReference type="InterPro" id="IPR036891">
    <property type="entry name" value="Signal_recog_part_SRP54_M_sf"/>
</dbReference>
<dbReference type="InterPro" id="IPR013822">
    <property type="entry name" value="Signal_recog_particl_SRP54_hlx"/>
</dbReference>
<dbReference type="InterPro" id="IPR004125">
    <property type="entry name" value="Signal_recog_particle_SRP54_M"/>
</dbReference>
<dbReference type="InterPro" id="IPR036225">
    <property type="entry name" value="SRP/SRP_N"/>
</dbReference>
<dbReference type="InterPro" id="IPR022941">
    <property type="entry name" value="SRP54"/>
</dbReference>
<dbReference type="InterPro" id="IPR006325">
    <property type="entry name" value="SRP54_euk"/>
</dbReference>
<dbReference type="InterPro" id="IPR000897">
    <property type="entry name" value="SRP54_GTPase_dom"/>
</dbReference>
<dbReference type="InterPro" id="IPR042101">
    <property type="entry name" value="SRP54_N_sf"/>
</dbReference>
<dbReference type="NCBIfam" id="TIGR01425">
    <property type="entry name" value="SRP54_euk"/>
    <property type="match status" value="1"/>
</dbReference>
<dbReference type="PANTHER" id="PTHR11564:SF39">
    <property type="entry name" value="SIGNAL RECOGNITION PARTICLE 54 KDA PROTEIN"/>
    <property type="match status" value="1"/>
</dbReference>
<dbReference type="PANTHER" id="PTHR11564">
    <property type="entry name" value="SIGNAL RECOGNITION PARTICLE 54K PROTEIN SRP54"/>
    <property type="match status" value="1"/>
</dbReference>
<dbReference type="Pfam" id="PF00448">
    <property type="entry name" value="SRP54"/>
    <property type="match status" value="1"/>
</dbReference>
<dbReference type="Pfam" id="PF02881">
    <property type="entry name" value="SRP54_N"/>
    <property type="match status" value="1"/>
</dbReference>
<dbReference type="Pfam" id="PF02978">
    <property type="entry name" value="SRP_SPB"/>
    <property type="match status" value="1"/>
</dbReference>
<dbReference type="SMART" id="SM00382">
    <property type="entry name" value="AAA"/>
    <property type="match status" value="1"/>
</dbReference>
<dbReference type="SMART" id="SM00962">
    <property type="entry name" value="SRP54"/>
    <property type="match status" value="1"/>
</dbReference>
<dbReference type="SMART" id="SM00963">
    <property type="entry name" value="SRP54_N"/>
    <property type="match status" value="1"/>
</dbReference>
<dbReference type="SUPFAM" id="SSF47364">
    <property type="entry name" value="Domain of the SRP/SRP receptor G-proteins"/>
    <property type="match status" value="1"/>
</dbReference>
<dbReference type="SUPFAM" id="SSF52540">
    <property type="entry name" value="P-loop containing nucleoside triphosphate hydrolases"/>
    <property type="match status" value="1"/>
</dbReference>
<dbReference type="SUPFAM" id="SSF47446">
    <property type="entry name" value="Signal peptide-binding domain"/>
    <property type="match status" value="1"/>
</dbReference>
<dbReference type="PROSITE" id="PS00300">
    <property type="entry name" value="SRP54"/>
    <property type="match status" value="1"/>
</dbReference>
<feature type="chain" id="PRO_0000101209" description="Signal recognition particle subunit SRP54 3">
    <location>
        <begin position="1"/>
        <end position="493"/>
    </location>
</feature>
<feature type="region of interest" description="G-domain">
    <location>
        <begin position="1"/>
        <end position="294"/>
    </location>
</feature>
<feature type="region of interest" description="M-domain">
    <location>
        <begin position="295"/>
        <end position="493"/>
    </location>
</feature>
<feature type="binding site" evidence="1">
    <location>
        <begin position="107"/>
        <end position="114"/>
    </location>
    <ligand>
        <name>GTP</name>
        <dbReference type="ChEBI" id="CHEBI:37565"/>
    </ligand>
</feature>
<feature type="binding site" evidence="1">
    <location>
        <begin position="189"/>
        <end position="193"/>
    </location>
    <ligand>
        <name>GTP</name>
        <dbReference type="ChEBI" id="CHEBI:37565"/>
    </ligand>
</feature>
<feature type="binding site" evidence="1">
    <location>
        <begin position="247"/>
        <end position="250"/>
    </location>
    <ligand>
        <name>GTP</name>
        <dbReference type="ChEBI" id="CHEBI:37565"/>
    </ligand>
</feature>
<protein>
    <recommendedName>
        <fullName>Signal recognition particle subunit SRP54 3</fullName>
        <ecNumber evidence="3">3.6.5.4</ecNumber>
    </recommendedName>
    <alternativeName>
        <fullName>Signal recognition particle 54 kDa protein 3</fullName>
        <shortName>SRP54</shortName>
    </alternativeName>
</protein>
<organism>
    <name type="scientific">Hordeum vulgare</name>
    <name type="common">Barley</name>
    <dbReference type="NCBI Taxonomy" id="4513"/>
    <lineage>
        <taxon>Eukaryota</taxon>
        <taxon>Viridiplantae</taxon>
        <taxon>Streptophyta</taxon>
        <taxon>Embryophyta</taxon>
        <taxon>Tracheophyta</taxon>
        <taxon>Spermatophyta</taxon>
        <taxon>Magnoliopsida</taxon>
        <taxon>Liliopsida</taxon>
        <taxon>Poales</taxon>
        <taxon>Poaceae</taxon>
        <taxon>BOP clade</taxon>
        <taxon>Pooideae</taxon>
        <taxon>Triticodae</taxon>
        <taxon>Triticeae</taxon>
        <taxon>Hordeinae</taxon>
        <taxon>Hordeum</taxon>
    </lineage>
</organism>
<reference key="1">
    <citation type="submission" date="1995-10" db="EMBL/GenBank/DDBJ databases">
        <authorList>
            <person name="Chu B."/>
            <person name="Brodl M.R."/>
            <person name="Belanger F.C."/>
        </authorList>
    </citation>
    <scope>NUCLEOTIDE SEQUENCE [MRNA]</scope>
    <source>
        <tissue>Root</tissue>
        <tissue>Shoot</tissue>
    </source>
</reference>
<evidence type="ECO:0000250" key="1"/>
<evidence type="ECO:0000250" key="2">
    <source>
        <dbReference type="UniProtKB" id="P61010"/>
    </source>
</evidence>
<evidence type="ECO:0000250" key="3">
    <source>
        <dbReference type="UniProtKB" id="P61011"/>
    </source>
</evidence>
<evidence type="ECO:0000305" key="4"/>
<comment type="function">
    <text evidence="2 3">Component of the signal recognition particle (SRP) complex, a ribonucleoprotein complex that mediates the cotranslational targeting of secretory and membrane proteins to the endoplasmic reticulum (ER). As part of the SRP complex, associates with the SRP receptor (SR) component SRPRA to target secretory proteins to the endoplasmic reticulum membrane. Binds to the signal sequence of presecretory proteins when they emerge from the ribosomes. Displays basal GTPase activity, and stimulates reciprocal GTPase activation of the SR subunit SRPRA. Forms a guanosine 5'-triphosphate (GTP)-dependent complex with the SR subunit SRPRA. SR compaction and GTPase mediated rearrangement of SR drive SRP-mediated cotranslational protein translocation into the ER (By similarity). Requires the presence of SRP9/SRP14 and/or SRP19 to stably interact with RNA (By similarity).</text>
</comment>
<comment type="catalytic activity">
    <reaction evidence="3">
        <text>GTP + H2O = GDP + phosphate + H(+)</text>
        <dbReference type="Rhea" id="RHEA:19669"/>
        <dbReference type="ChEBI" id="CHEBI:15377"/>
        <dbReference type="ChEBI" id="CHEBI:15378"/>
        <dbReference type="ChEBI" id="CHEBI:37565"/>
        <dbReference type="ChEBI" id="CHEBI:43474"/>
        <dbReference type="ChEBI" id="CHEBI:58189"/>
        <dbReference type="EC" id="3.6.5.4"/>
    </reaction>
    <physiologicalReaction direction="left-to-right" evidence="3">
        <dbReference type="Rhea" id="RHEA:19670"/>
    </physiologicalReaction>
</comment>
<comment type="subunit">
    <text evidence="3">Component of a signal recognition particle (SRP) complex that consists of a 7SL RNA molecule of 300 nucleotides and six protein subunits: SRP72, SRP68, SRP54, SRP19, SRP14 and SRP9.</text>
</comment>
<comment type="subcellular location">
    <subcellularLocation>
        <location evidence="3">Cytoplasm</location>
    </subcellularLocation>
    <subcellularLocation>
        <location evidence="3">Endoplasmic reticulum</location>
    </subcellularLocation>
</comment>
<comment type="domain">
    <text evidence="3">The NG domain, also named G domain, is a special guanosine triphosphatase (GTPase) domain, which binds GTP and forms a guanosine 5'-triphosphate (GTP)-dependent complex with a homologous NG domain in the SRP receptor subunit SRPRA. The two NG domains undergo cooperative rearrangements upon their assembly, which culminate in the reciprocal activation of the GTPase activity of one another. SRP receptor compaction upon binding with cargo-loaded SRP and GTPase rearrangement drive SRP-mediated cotranslational protein translocation into the ER.</text>
</comment>
<comment type="domain">
    <text evidence="3">The M domain binds the 7SL RNA in presence of SRP19 and binds the signal sequence of presecretory proteins.</text>
</comment>
<comment type="similarity">
    <text evidence="4">Belongs to the GTP-binding SRP family. SRP54 subfamily.</text>
</comment>
<keyword id="KW-0963">Cytoplasm</keyword>
<keyword id="KW-0256">Endoplasmic reticulum</keyword>
<keyword id="KW-0342">GTP-binding</keyword>
<keyword id="KW-0378">Hydrolase</keyword>
<keyword id="KW-0547">Nucleotide-binding</keyword>
<keyword id="KW-0687">Ribonucleoprotein</keyword>
<keyword id="KW-0694">RNA-binding</keyword>
<keyword id="KW-0733">Signal recognition particle</keyword>
<sequence length="493" mass="53824">MVLADVGGSISRALAMSSAAVVDESVLRECLNEIARALMQSDVRFKTVCDLQANIRKTVNLEALAAGTNKRRIIETSVGKELCKMLDTGKPAFVPKKGKPNVVMFVGLQGSGKTTTCTKYAHYHQRKGFKPSLVCADTFRAGAFDQLKQNATKAKIPFYGSYMESDPVKIAVEGLEKFRQEKSDLIIIDTSGRHMQEAALFEEMRQVAEATKPDLVIFVMDGSIGQAAFDQAQAFKQSASVGAVIVTKLDGHAKGGGALSAVAATKSPVIFIGTGEHIDDFDVFNVEPFVARLLGRGDLPGLIDKMESIVPADQQSELVAKLSEGAFTLRLLYEQFQNLLKMGPMSQIFSMLPGFSSELMPKGQEKQSKEKFKRYMTIMDSMTPAELDSTNPKLMTESRIIRVARGSGRKVKDVMEMLEEYKRLAKMWSKRNVSKLIPQNGKMSAQAIQKMLKVMPPQVVQQMGGKSGLEALLKQLGGGKDTSKMLAGMRGGA</sequence>
<gene>
    <name type="primary">SRP54-3</name>
</gene>
<accession>P49970</accession>
<name>SR543_HORVU</name>
<proteinExistence type="evidence at transcript level"/>